<accession>Q3ATB5</accession>
<gene>
    <name evidence="1" type="primary">fmt</name>
    <name type="ordered locus">Cag_0487</name>
</gene>
<comment type="function">
    <text evidence="1">Attaches a formyl group to the free amino group of methionyl-tRNA(fMet). The formyl group appears to play a dual role in the initiator identity of N-formylmethionyl-tRNA by promoting its recognition by IF2 and preventing the misappropriation of this tRNA by the elongation apparatus.</text>
</comment>
<comment type="catalytic activity">
    <reaction evidence="1">
        <text>L-methionyl-tRNA(fMet) + (6R)-10-formyltetrahydrofolate = N-formyl-L-methionyl-tRNA(fMet) + (6S)-5,6,7,8-tetrahydrofolate + H(+)</text>
        <dbReference type="Rhea" id="RHEA:24380"/>
        <dbReference type="Rhea" id="RHEA-COMP:9952"/>
        <dbReference type="Rhea" id="RHEA-COMP:9953"/>
        <dbReference type="ChEBI" id="CHEBI:15378"/>
        <dbReference type="ChEBI" id="CHEBI:57453"/>
        <dbReference type="ChEBI" id="CHEBI:78530"/>
        <dbReference type="ChEBI" id="CHEBI:78844"/>
        <dbReference type="ChEBI" id="CHEBI:195366"/>
        <dbReference type="EC" id="2.1.2.9"/>
    </reaction>
</comment>
<comment type="similarity">
    <text evidence="1">Belongs to the Fmt family.</text>
</comment>
<dbReference type="EC" id="2.1.2.9" evidence="1"/>
<dbReference type="EMBL" id="CP000108">
    <property type="protein sequence ID" value="ABB27760.1"/>
    <property type="molecule type" value="Genomic_DNA"/>
</dbReference>
<dbReference type="SMR" id="Q3ATB5"/>
<dbReference type="STRING" id="340177.Cag_0487"/>
<dbReference type="KEGG" id="cch:Cag_0487"/>
<dbReference type="eggNOG" id="COG0223">
    <property type="taxonomic scope" value="Bacteria"/>
</dbReference>
<dbReference type="HOGENOM" id="CLU_033347_1_1_10"/>
<dbReference type="OrthoDB" id="9802815at2"/>
<dbReference type="GO" id="GO:0005829">
    <property type="term" value="C:cytosol"/>
    <property type="evidence" value="ECO:0007669"/>
    <property type="project" value="TreeGrafter"/>
</dbReference>
<dbReference type="GO" id="GO:0004479">
    <property type="term" value="F:methionyl-tRNA formyltransferase activity"/>
    <property type="evidence" value="ECO:0007669"/>
    <property type="project" value="UniProtKB-UniRule"/>
</dbReference>
<dbReference type="CDD" id="cd08646">
    <property type="entry name" value="FMT_core_Met-tRNA-FMT_N"/>
    <property type="match status" value="1"/>
</dbReference>
<dbReference type="CDD" id="cd08704">
    <property type="entry name" value="Met_tRNA_FMT_C"/>
    <property type="match status" value="1"/>
</dbReference>
<dbReference type="Gene3D" id="3.40.50.12230">
    <property type="match status" value="1"/>
</dbReference>
<dbReference type="HAMAP" id="MF_00182">
    <property type="entry name" value="Formyl_trans"/>
    <property type="match status" value="1"/>
</dbReference>
<dbReference type="InterPro" id="IPR005794">
    <property type="entry name" value="Fmt"/>
</dbReference>
<dbReference type="InterPro" id="IPR005793">
    <property type="entry name" value="Formyl_trans_C"/>
</dbReference>
<dbReference type="InterPro" id="IPR002376">
    <property type="entry name" value="Formyl_transf_N"/>
</dbReference>
<dbReference type="InterPro" id="IPR036477">
    <property type="entry name" value="Formyl_transf_N_sf"/>
</dbReference>
<dbReference type="InterPro" id="IPR011034">
    <property type="entry name" value="Formyl_transferase-like_C_sf"/>
</dbReference>
<dbReference type="InterPro" id="IPR044135">
    <property type="entry name" value="Met-tRNA-FMT_C"/>
</dbReference>
<dbReference type="InterPro" id="IPR041711">
    <property type="entry name" value="Met-tRNA-FMT_N"/>
</dbReference>
<dbReference type="NCBIfam" id="TIGR00460">
    <property type="entry name" value="fmt"/>
    <property type="match status" value="1"/>
</dbReference>
<dbReference type="PANTHER" id="PTHR11138">
    <property type="entry name" value="METHIONYL-TRNA FORMYLTRANSFERASE"/>
    <property type="match status" value="1"/>
</dbReference>
<dbReference type="PANTHER" id="PTHR11138:SF5">
    <property type="entry name" value="METHIONYL-TRNA FORMYLTRANSFERASE, MITOCHONDRIAL"/>
    <property type="match status" value="1"/>
</dbReference>
<dbReference type="Pfam" id="PF02911">
    <property type="entry name" value="Formyl_trans_C"/>
    <property type="match status" value="1"/>
</dbReference>
<dbReference type="Pfam" id="PF00551">
    <property type="entry name" value="Formyl_trans_N"/>
    <property type="match status" value="1"/>
</dbReference>
<dbReference type="SUPFAM" id="SSF50486">
    <property type="entry name" value="FMT C-terminal domain-like"/>
    <property type="match status" value="1"/>
</dbReference>
<dbReference type="SUPFAM" id="SSF53328">
    <property type="entry name" value="Formyltransferase"/>
    <property type="match status" value="1"/>
</dbReference>
<evidence type="ECO:0000255" key="1">
    <source>
        <dbReference type="HAMAP-Rule" id="MF_00182"/>
    </source>
</evidence>
<organism>
    <name type="scientific">Chlorobium chlorochromatii (strain CaD3)</name>
    <dbReference type="NCBI Taxonomy" id="340177"/>
    <lineage>
        <taxon>Bacteria</taxon>
        <taxon>Pseudomonadati</taxon>
        <taxon>Chlorobiota</taxon>
        <taxon>Chlorobiia</taxon>
        <taxon>Chlorobiales</taxon>
        <taxon>Chlorobiaceae</taxon>
        <taxon>Chlorobium/Pelodictyon group</taxon>
        <taxon>Chlorobium</taxon>
    </lineage>
</organism>
<keyword id="KW-0648">Protein biosynthesis</keyword>
<keyword id="KW-0808">Transferase</keyword>
<feature type="chain" id="PRO_1000058397" description="Methionyl-tRNA formyltransferase">
    <location>
        <begin position="1"/>
        <end position="314"/>
    </location>
</feature>
<feature type="binding site" evidence="1">
    <location>
        <begin position="111"/>
        <end position="114"/>
    </location>
    <ligand>
        <name>(6S)-5,6,7,8-tetrahydrofolate</name>
        <dbReference type="ChEBI" id="CHEBI:57453"/>
    </ligand>
</feature>
<proteinExistence type="inferred from homology"/>
<sequence length="314" mass="33971">MRIIVMGTPDFAVPSLQAIAAMGNGFDIVLVVTGQDKPRKSKHAAAEASPIKQAALALNLPVHEVDDVNDPHFAEIVAAYKPDVIVVAAFRILPPAVYSQARLGAFNLHASLLPAYRGAAPVNWAIMNGEEETGVTTFFLQQRVDTGTIIMQQKTAIAPEENATELIVRLANIGADVVVETLRRIAAKNAATAPQDDSLASRAPKLTRINTRINWEQPVATLHNFIRGLALKPSAWTTFNDKTLKIFRTTLSTPEHDHPSAPAGSLLVSHGKLYVHGSDGWLELLALQLEGRKPMEAADFARGLHVEGEALRLV</sequence>
<protein>
    <recommendedName>
        <fullName evidence="1">Methionyl-tRNA formyltransferase</fullName>
        <ecNumber evidence="1">2.1.2.9</ecNumber>
    </recommendedName>
</protein>
<name>FMT_CHLCH</name>
<reference key="1">
    <citation type="submission" date="2005-08" db="EMBL/GenBank/DDBJ databases">
        <title>Complete sequence of Chlorobium chlorochromatii CaD3.</title>
        <authorList>
            <consortium name="US DOE Joint Genome Institute"/>
            <person name="Copeland A."/>
            <person name="Lucas S."/>
            <person name="Lapidus A."/>
            <person name="Barry K."/>
            <person name="Detter J.C."/>
            <person name="Glavina T."/>
            <person name="Hammon N."/>
            <person name="Israni S."/>
            <person name="Pitluck S."/>
            <person name="Bryant D."/>
            <person name="Schmutz J."/>
            <person name="Larimer F."/>
            <person name="Land M."/>
            <person name="Kyrpides N."/>
            <person name="Ivanova N."/>
            <person name="Richardson P."/>
        </authorList>
    </citation>
    <scope>NUCLEOTIDE SEQUENCE [LARGE SCALE GENOMIC DNA]</scope>
    <source>
        <strain>CaD3</strain>
    </source>
</reference>